<reference key="1">
    <citation type="journal article" date="2012" name="PLoS ONE">
        <title>Identification and phylogenetic analysis of Tityus pachyurus and Tityus obscurus novel putative Na+-channel scorpion toxins.</title>
        <authorList>
            <person name="Guerrero-Vargas J.A."/>
            <person name="Mourao C.B."/>
            <person name="Quintero-Hernandez V."/>
            <person name="Possani L.D."/>
            <person name="Schwartz E.F."/>
        </authorList>
    </citation>
    <scope>NUCLEOTIDE SEQUENCE [MRNA]</scope>
    <scope>NOMENCLATURE</scope>
    <source>
        <tissue>Venom gland</tissue>
    </source>
</reference>
<reference key="2">
    <citation type="journal article" date="2004" name="J. Chromatogr. B">
        <title>Proteomics of the venom from the Amazonian scorpion Tityus cambridgei and the role of prolines on mass spectrometry analysis of toxins.</title>
        <authorList>
            <person name="Batista C.V.F."/>
            <person name="del Pozo L."/>
            <person name="Zamudio F.Z."/>
            <person name="Contreras S."/>
            <person name="Becerril B."/>
            <person name="Wanke E."/>
            <person name="Possani L.D."/>
        </authorList>
    </citation>
    <scope>PROTEIN SEQUENCE OF 21-30</scope>
    <scope>SUBCELLULAR LOCATION</scope>
    <scope>MASS SPECTROMETRY</scope>
    <source>
        <tissue>Venom</tissue>
    </source>
</reference>
<evidence type="ECO:0000250" key="1">
    <source>
        <dbReference type="UniProtKB" id="P0DQU6"/>
    </source>
</evidence>
<evidence type="ECO:0000255" key="2"/>
<evidence type="ECO:0000255" key="3">
    <source>
        <dbReference type="PROSITE-ProRule" id="PRU01210"/>
    </source>
</evidence>
<evidence type="ECO:0000269" key="4">
    <source>
    </source>
</evidence>
<evidence type="ECO:0000303" key="5">
    <source>
    </source>
</evidence>
<evidence type="ECO:0000305" key="6"/>
<organism>
    <name type="scientific">Tityus obscurus</name>
    <name type="common">Amazonian scorpion</name>
    <name type="synonym">Tityus cambridgei</name>
    <dbReference type="NCBI Taxonomy" id="1221240"/>
    <lineage>
        <taxon>Eukaryota</taxon>
        <taxon>Metazoa</taxon>
        <taxon>Ecdysozoa</taxon>
        <taxon>Arthropoda</taxon>
        <taxon>Chelicerata</taxon>
        <taxon>Arachnida</taxon>
        <taxon>Scorpiones</taxon>
        <taxon>Buthida</taxon>
        <taxon>Buthoidea</taxon>
        <taxon>Buthidae</taxon>
        <taxon>Tityus</taxon>
    </lineage>
</organism>
<proteinExistence type="evidence at protein level"/>
<protein>
    <recommendedName>
        <fullName>Toxin To14</fullName>
    </recommendedName>
    <alternativeName>
        <fullName>T-alpha* NaTx3.10</fullName>
    </alternativeName>
    <alternativeName>
        <fullName evidence="5">Toxin Tc41</fullName>
    </alternativeName>
    <alternativeName>
        <fullName evidence="5">Toxin To41</fullName>
    </alternativeName>
</protein>
<dbReference type="EMBL" id="HE585237">
    <property type="protein sequence ID" value="CCD31431.1"/>
    <property type="molecule type" value="mRNA"/>
</dbReference>
<dbReference type="SMR" id="H1ZZI3"/>
<dbReference type="GO" id="GO:0005576">
    <property type="term" value="C:extracellular region"/>
    <property type="evidence" value="ECO:0007669"/>
    <property type="project" value="UniProtKB-SubCell"/>
</dbReference>
<dbReference type="GO" id="GO:0019871">
    <property type="term" value="F:sodium channel inhibitor activity"/>
    <property type="evidence" value="ECO:0007669"/>
    <property type="project" value="InterPro"/>
</dbReference>
<dbReference type="GO" id="GO:0090729">
    <property type="term" value="F:toxin activity"/>
    <property type="evidence" value="ECO:0007669"/>
    <property type="project" value="UniProtKB-KW"/>
</dbReference>
<dbReference type="GO" id="GO:0006952">
    <property type="term" value="P:defense response"/>
    <property type="evidence" value="ECO:0007669"/>
    <property type="project" value="InterPro"/>
</dbReference>
<dbReference type="CDD" id="cd23106">
    <property type="entry name" value="neurotoxins_LC_scorpion"/>
    <property type="match status" value="1"/>
</dbReference>
<dbReference type="Gene3D" id="3.30.30.10">
    <property type="entry name" value="Knottin, scorpion toxin-like"/>
    <property type="match status" value="1"/>
</dbReference>
<dbReference type="InterPro" id="IPR044062">
    <property type="entry name" value="LCN-type_CS_alpha_beta_dom"/>
</dbReference>
<dbReference type="InterPro" id="IPR003614">
    <property type="entry name" value="Scorpion_toxin-like"/>
</dbReference>
<dbReference type="InterPro" id="IPR036574">
    <property type="entry name" value="Scorpion_toxin-like_sf"/>
</dbReference>
<dbReference type="InterPro" id="IPR018218">
    <property type="entry name" value="Scorpion_toxinL"/>
</dbReference>
<dbReference type="InterPro" id="IPR002061">
    <property type="entry name" value="Scorpion_toxinL/defensin"/>
</dbReference>
<dbReference type="Pfam" id="PF00537">
    <property type="entry name" value="Toxin_3"/>
    <property type="match status" value="1"/>
</dbReference>
<dbReference type="PRINTS" id="PR00285">
    <property type="entry name" value="SCORPNTOXIN"/>
</dbReference>
<dbReference type="SMART" id="SM00505">
    <property type="entry name" value="Knot1"/>
    <property type="match status" value="1"/>
</dbReference>
<dbReference type="SUPFAM" id="SSF57095">
    <property type="entry name" value="Scorpion toxin-like"/>
    <property type="match status" value="1"/>
</dbReference>
<dbReference type="PROSITE" id="PS51863">
    <property type="entry name" value="LCN_CSAB"/>
    <property type="match status" value="1"/>
</dbReference>
<keyword id="KW-0903">Direct protein sequencing</keyword>
<keyword id="KW-1015">Disulfide bond</keyword>
<keyword id="KW-0872">Ion channel impairing toxin</keyword>
<keyword id="KW-0528">Neurotoxin</keyword>
<keyword id="KW-0964">Secreted</keyword>
<keyword id="KW-0732">Signal</keyword>
<keyword id="KW-0800">Toxin</keyword>
<keyword id="KW-0738">Voltage-gated sodium channel impairing toxin</keyword>
<comment type="function">
    <text evidence="6">Inhibits voltage-gated sodium channels (Nav).</text>
</comment>
<comment type="subcellular location">
    <subcellularLocation>
        <location evidence="4">Secreted</location>
    </subcellularLocation>
</comment>
<comment type="tissue specificity">
    <text evidence="4">Expressed by the venom gland.</text>
</comment>
<comment type="domain">
    <text evidence="6">Has the structural arrangement of an alpha-helix connected to antiparallel beta-sheets by disulfide bonds (CS-alpha/beta).</text>
</comment>
<comment type="mass spectrometry" mass="7109.4" method="Electrospray" evidence="4"/>
<comment type="similarity">
    <text evidence="6">Belongs to the long (4 C-C) scorpion toxin superfamily. Sodium channel inhibitor family.</text>
</comment>
<feature type="signal peptide" evidence="2">
    <location>
        <begin position="1"/>
        <end position="19"/>
    </location>
</feature>
<feature type="chain" id="PRO_5000851440" description="Toxin To14" evidence="1 4">
    <location>
        <begin position="20"/>
        <end position="88"/>
    </location>
</feature>
<feature type="domain" description="LCN-type CS-alpha/beta" evidence="3">
    <location>
        <begin position="21"/>
        <end position="85"/>
    </location>
</feature>
<feature type="disulfide bond" evidence="3">
    <location>
        <begin position="33"/>
        <end position="84"/>
    </location>
</feature>
<feature type="disulfide bond" evidence="3">
    <location>
        <begin position="37"/>
        <end position="60"/>
    </location>
</feature>
<feature type="disulfide bond" evidence="3">
    <location>
        <begin position="46"/>
        <end position="67"/>
    </location>
</feature>
<feature type="disulfide bond" evidence="3">
    <location>
        <begin position="50"/>
        <end position="69"/>
    </location>
</feature>
<accession>H1ZZI3</accession>
<accession>P84684</accession>
<sequence length="89" mass="10106">MNCLMLIFVVFLLAFGVECKKDDYPVDTAKRNCMLDCNVWDDEGYCDKFCKGRKADSGYCYKLKAACYCYGLPDDSPTKTSGRCNPNVR</sequence>
<name>SCX14_TITOB</name>